<comment type="function">
    <text evidence="1">Part of the phosphoribosylformylglycinamidine synthase complex involved in the purines biosynthetic pathway. Catalyzes the ATP-dependent conversion of formylglycinamide ribonucleotide (FGAR) and glutamine to yield formylglycinamidine ribonucleotide (FGAM) and glutamate. The FGAM synthase complex is composed of three subunits. PurQ produces an ammonia molecule by converting glutamine to glutamate. PurL transfers the ammonia molecule to FGAR to form FGAM in an ATP-dependent manner. PurS interacts with PurQ and PurL and is thought to assist in the transfer of the ammonia molecule from PurQ to PurL.</text>
</comment>
<comment type="catalytic activity">
    <reaction evidence="1">
        <text>N(2)-formyl-N(1)-(5-phospho-beta-D-ribosyl)glycinamide + L-glutamine + ATP + H2O = 2-formamido-N(1)-(5-O-phospho-beta-D-ribosyl)acetamidine + L-glutamate + ADP + phosphate + H(+)</text>
        <dbReference type="Rhea" id="RHEA:17129"/>
        <dbReference type="ChEBI" id="CHEBI:15377"/>
        <dbReference type="ChEBI" id="CHEBI:15378"/>
        <dbReference type="ChEBI" id="CHEBI:29985"/>
        <dbReference type="ChEBI" id="CHEBI:30616"/>
        <dbReference type="ChEBI" id="CHEBI:43474"/>
        <dbReference type="ChEBI" id="CHEBI:58359"/>
        <dbReference type="ChEBI" id="CHEBI:147286"/>
        <dbReference type="ChEBI" id="CHEBI:147287"/>
        <dbReference type="ChEBI" id="CHEBI:456216"/>
        <dbReference type="EC" id="6.3.5.3"/>
    </reaction>
</comment>
<comment type="catalytic activity">
    <reaction evidence="1">
        <text>L-glutamine + H2O = L-glutamate + NH4(+)</text>
        <dbReference type="Rhea" id="RHEA:15889"/>
        <dbReference type="ChEBI" id="CHEBI:15377"/>
        <dbReference type="ChEBI" id="CHEBI:28938"/>
        <dbReference type="ChEBI" id="CHEBI:29985"/>
        <dbReference type="ChEBI" id="CHEBI:58359"/>
        <dbReference type="EC" id="3.5.1.2"/>
    </reaction>
</comment>
<comment type="pathway">
    <text evidence="1">Purine metabolism; IMP biosynthesis via de novo pathway; 5-amino-1-(5-phospho-D-ribosyl)imidazole from N(2)-formyl-N(1)-(5-phospho-D-ribosyl)glycinamide: step 1/2.</text>
</comment>
<comment type="subunit">
    <text evidence="1">Part of the FGAM synthase complex composed of 1 PurL, 1 PurQ and 2 PurS subunits.</text>
</comment>
<comment type="subcellular location">
    <subcellularLocation>
        <location evidence="1">Cytoplasm</location>
    </subcellularLocation>
</comment>
<accession>B7HS31</accession>
<reference key="1">
    <citation type="submission" date="2008-10" db="EMBL/GenBank/DDBJ databases">
        <title>Genome sequence of Bacillus cereus AH187.</title>
        <authorList>
            <person name="Dodson R.J."/>
            <person name="Durkin A.S."/>
            <person name="Rosovitz M.J."/>
            <person name="Rasko D.A."/>
            <person name="Kolsto A.B."/>
            <person name="Okstad O.A."/>
            <person name="Ravel J."/>
            <person name="Sutton G."/>
        </authorList>
    </citation>
    <scope>NUCLEOTIDE SEQUENCE [LARGE SCALE GENOMIC DNA]</scope>
    <source>
        <strain>AH187</strain>
    </source>
</reference>
<name>PURQ_BACC7</name>
<proteinExistence type="inferred from homology"/>
<evidence type="ECO:0000255" key="1">
    <source>
        <dbReference type="HAMAP-Rule" id="MF_00421"/>
    </source>
</evidence>
<sequence>MKFAVIVFPGSNCDVDMFHAIKDELGEEVDYVWHDTENLDEYDAILLPGGFSYGDYLRCGAISRFANAMKAVQKAAEQGKPILGVCNGFQILVESGLLPGALMRNENLKFMCRTVQLRVENNETMFTSQYEKDEVINIPIAHGEGNYYCDEETLKQLEENNQIAFRYVENPNGSVSDIAGIVNEKGNVLGMMPHPERAVDELLGGAEGLKVFQSILKQWRETYVVNA</sequence>
<dbReference type="EC" id="6.3.5.3" evidence="1"/>
<dbReference type="EC" id="3.5.1.2" evidence="1"/>
<dbReference type="EMBL" id="CP001177">
    <property type="protein sequence ID" value="ACJ77239.1"/>
    <property type="molecule type" value="Genomic_DNA"/>
</dbReference>
<dbReference type="SMR" id="B7HS31"/>
<dbReference type="KEGG" id="bcr:BCAH187_A0366"/>
<dbReference type="HOGENOM" id="CLU_001031_3_1_9"/>
<dbReference type="UniPathway" id="UPA00074">
    <property type="reaction ID" value="UER00128"/>
</dbReference>
<dbReference type="Proteomes" id="UP000002214">
    <property type="component" value="Chromosome"/>
</dbReference>
<dbReference type="GO" id="GO:0005737">
    <property type="term" value="C:cytoplasm"/>
    <property type="evidence" value="ECO:0007669"/>
    <property type="project" value="UniProtKB-SubCell"/>
</dbReference>
<dbReference type="GO" id="GO:0005524">
    <property type="term" value="F:ATP binding"/>
    <property type="evidence" value="ECO:0007669"/>
    <property type="project" value="UniProtKB-KW"/>
</dbReference>
<dbReference type="GO" id="GO:0004359">
    <property type="term" value="F:glutaminase activity"/>
    <property type="evidence" value="ECO:0007669"/>
    <property type="project" value="UniProtKB-EC"/>
</dbReference>
<dbReference type="GO" id="GO:0004642">
    <property type="term" value="F:phosphoribosylformylglycinamidine synthase activity"/>
    <property type="evidence" value="ECO:0007669"/>
    <property type="project" value="UniProtKB-UniRule"/>
</dbReference>
<dbReference type="GO" id="GO:0006189">
    <property type="term" value="P:'de novo' IMP biosynthetic process"/>
    <property type="evidence" value="ECO:0007669"/>
    <property type="project" value="UniProtKB-UniRule"/>
</dbReference>
<dbReference type="CDD" id="cd01740">
    <property type="entry name" value="GATase1_FGAR_AT"/>
    <property type="match status" value="1"/>
</dbReference>
<dbReference type="FunFam" id="3.40.50.880:FF:000019">
    <property type="entry name" value="Phosphoribosylformylglycinamidine synthase subunit PurQ"/>
    <property type="match status" value="1"/>
</dbReference>
<dbReference type="Gene3D" id="3.40.50.880">
    <property type="match status" value="1"/>
</dbReference>
<dbReference type="HAMAP" id="MF_00421">
    <property type="entry name" value="PurQ"/>
    <property type="match status" value="1"/>
</dbReference>
<dbReference type="InterPro" id="IPR029062">
    <property type="entry name" value="Class_I_gatase-like"/>
</dbReference>
<dbReference type="InterPro" id="IPR010075">
    <property type="entry name" value="PRibForGlyAmidine_synth_PurQ"/>
</dbReference>
<dbReference type="NCBIfam" id="TIGR01737">
    <property type="entry name" value="FGAM_synth_I"/>
    <property type="match status" value="1"/>
</dbReference>
<dbReference type="NCBIfam" id="NF002957">
    <property type="entry name" value="PRK03619.1"/>
    <property type="match status" value="1"/>
</dbReference>
<dbReference type="PANTHER" id="PTHR47552">
    <property type="entry name" value="PHOSPHORIBOSYLFORMYLGLYCINAMIDINE SYNTHASE SUBUNIT PURQ"/>
    <property type="match status" value="1"/>
</dbReference>
<dbReference type="PANTHER" id="PTHR47552:SF1">
    <property type="entry name" value="PHOSPHORIBOSYLFORMYLGLYCINAMIDINE SYNTHASE SUBUNIT PURQ"/>
    <property type="match status" value="1"/>
</dbReference>
<dbReference type="Pfam" id="PF13507">
    <property type="entry name" value="GATase_5"/>
    <property type="match status" value="1"/>
</dbReference>
<dbReference type="PIRSF" id="PIRSF001586">
    <property type="entry name" value="FGAM_synth_I"/>
    <property type="match status" value="1"/>
</dbReference>
<dbReference type="SMART" id="SM01211">
    <property type="entry name" value="GATase_5"/>
    <property type="match status" value="1"/>
</dbReference>
<dbReference type="SUPFAM" id="SSF52317">
    <property type="entry name" value="Class I glutamine amidotransferase-like"/>
    <property type="match status" value="1"/>
</dbReference>
<dbReference type="PROSITE" id="PS51273">
    <property type="entry name" value="GATASE_TYPE_1"/>
    <property type="match status" value="1"/>
</dbReference>
<feature type="chain" id="PRO_1000194844" description="Phosphoribosylformylglycinamidine synthase subunit PurQ">
    <location>
        <begin position="1"/>
        <end position="227"/>
    </location>
</feature>
<feature type="domain" description="Glutamine amidotransferase type-1" evidence="1">
    <location>
        <begin position="3"/>
        <end position="225"/>
    </location>
</feature>
<feature type="active site" description="Nucleophile" evidence="1">
    <location>
        <position position="86"/>
    </location>
</feature>
<feature type="active site" evidence="1">
    <location>
        <position position="194"/>
    </location>
</feature>
<feature type="active site" evidence="1">
    <location>
        <position position="196"/>
    </location>
</feature>
<keyword id="KW-0067">ATP-binding</keyword>
<keyword id="KW-0963">Cytoplasm</keyword>
<keyword id="KW-0315">Glutamine amidotransferase</keyword>
<keyword id="KW-0378">Hydrolase</keyword>
<keyword id="KW-0436">Ligase</keyword>
<keyword id="KW-0547">Nucleotide-binding</keyword>
<keyword id="KW-0658">Purine biosynthesis</keyword>
<gene>
    <name evidence="1" type="primary">purQ</name>
    <name type="ordered locus">BCAH187_A0366</name>
</gene>
<organism>
    <name type="scientific">Bacillus cereus (strain AH187)</name>
    <dbReference type="NCBI Taxonomy" id="405534"/>
    <lineage>
        <taxon>Bacteria</taxon>
        <taxon>Bacillati</taxon>
        <taxon>Bacillota</taxon>
        <taxon>Bacilli</taxon>
        <taxon>Bacillales</taxon>
        <taxon>Bacillaceae</taxon>
        <taxon>Bacillus</taxon>
        <taxon>Bacillus cereus group</taxon>
    </lineage>
</organism>
<protein>
    <recommendedName>
        <fullName evidence="1">Phosphoribosylformylglycinamidine synthase subunit PurQ</fullName>
        <shortName evidence="1">FGAM synthase</shortName>
        <ecNumber evidence="1">6.3.5.3</ecNumber>
    </recommendedName>
    <alternativeName>
        <fullName evidence="1">Formylglycinamide ribonucleotide amidotransferase subunit I</fullName>
        <shortName evidence="1">FGAR amidotransferase I</shortName>
        <shortName evidence="1">FGAR-AT I</shortName>
    </alternativeName>
    <alternativeName>
        <fullName evidence="1">Glutaminase PurQ</fullName>
        <ecNumber evidence="1">3.5.1.2</ecNumber>
    </alternativeName>
    <alternativeName>
        <fullName evidence="1">Phosphoribosylformylglycinamidine synthase subunit I</fullName>
    </alternativeName>
</protein>